<name>RIBB_ECO7I</name>
<dbReference type="EC" id="4.1.99.12" evidence="1"/>
<dbReference type="EMBL" id="CU928164">
    <property type="protein sequence ID" value="CAR19654.1"/>
    <property type="molecule type" value="Genomic_DNA"/>
</dbReference>
<dbReference type="RefSeq" id="WP_001076997.1">
    <property type="nucleotide sequence ID" value="NC_011750.1"/>
</dbReference>
<dbReference type="RefSeq" id="YP_002409444.1">
    <property type="nucleotide sequence ID" value="NC_011750.1"/>
</dbReference>
<dbReference type="SMR" id="B7NJQ5"/>
<dbReference type="STRING" id="585057.ECIAI39_3538"/>
<dbReference type="GeneID" id="93778953"/>
<dbReference type="KEGG" id="ect:ECIAI39_3538"/>
<dbReference type="PATRIC" id="fig|585057.6.peg.3666"/>
<dbReference type="HOGENOM" id="CLU_020273_3_0_6"/>
<dbReference type="UniPathway" id="UPA00275">
    <property type="reaction ID" value="UER00399"/>
</dbReference>
<dbReference type="Proteomes" id="UP000000749">
    <property type="component" value="Chromosome"/>
</dbReference>
<dbReference type="GO" id="GO:0005829">
    <property type="term" value="C:cytosol"/>
    <property type="evidence" value="ECO:0007669"/>
    <property type="project" value="TreeGrafter"/>
</dbReference>
<dbReference type="GO" id="GO:0008686">
    <property type="term" value="F:3,4-dihydroxy-2-butanone-4-phosphate synthase activity"/>
    <property type="evidence" value="ECO:0007669"/>
    <property type="project" value="UniProtKB-UniRule"/>
</dbReference>
<dbReference type="GO" id="GO:0000287">
    <property type="term" value="F:magnesium ion binding"/>
    <property type="evidence" value="ECO:0007669"/>
    <property type="project" value="UniProtKB-UniRule"/>
</dbReference>
<dbReference type="GO" id="GO:0030145">
    <property type="term" value="F:manganese ion binding"/>
    <property type="evidence" value="ECO:0007669"/>
    <property type="project" value="UniProtKB-UniRule"/>
</dbReference>
<dbReference type="GO" id="GO:0009231">
    <property type="term" value="P:riboflavin biosynthetic process"/>
    <property type="evidence" value="ECO:0007669"/>
    <property type="project" value="UniProtKB-UniRule"/>
</dbReference>
<dbReference type="FunFam" id="3.90.870.10:FF:000002">
    <property type="entry name" value="3,4-dihydroxy-2-butanone 4-phosphate synthase"/>
    <property type="match status" value="1"/>
</dbReference>
<dbReference type="Gene3D" id="3.90.870.10">
    <property type="entry name" value="DHBP synthase"/>
    <property type="match status" value="1"/>
</dbReference>
<dbReference type="HAMAP" id="MF_00180">
    <property type="entry name" value="RibB"/>
    <property type="match status" value="1"/>
</dbReference>
<dbReference type="InterPro" id="IPR017945">
    <property type="entry name" value="DHBP_synth_RibB-like_a/b_dom"/>
</dbReference>
<dbReference type="InterPro" id="IPR000422">
    <property type="entry name" value="DHBP_synthase_RibB"/>
</dbReference>
<dbReference type="NCBIfam" id="TIGR00506">
    <property type="entry name" value="ribB"/>
    <property type="match status" value="1"/>
</dbReference>
<dbReference type="PANTHER" id="PTHR21327:SF38">
    <property type="entry name" value="3,4-DIHYDROXY-2-BUTANONE 4-PHOSPHATE SYNTHASE"/>
    <property type="match status" value="1"/>
</dbReference>
<dbReference type="PANTHER" id="PTHR21327">
    <property type="entry name" value="GTP CYCLOHYDROLASE II-RELATED"/>
    <property type="match status" value="1"/>
</dbReference>
<dbReference type="Pfam" id="PF00926">
    <property type="entry name" value="DHBP_synthase"/>
    <property type="match status" value="1"/>
</dbReference>
<dbReference type="SUPFAM" id="SSF55821">
    <property type="entry name" value="YrdC/RibB"/>
    <property type="match status" value="1"/>
</dbReference>
<sequence length="217" mass="23353">MNQTLLSSFGTPFERVENALAALREGRGVMVLDDEDRENEGDMIFPAETMTVEQMALTIRHGSGIVCLCITEDRRKQLDLPMMVENNTSAYGTGFTVTIEAAEGVTTGVSAADRITTVRAAIADGAKPSDLNRPGHVFPLRAQAGGVLTRGGHTEATIDLMTLAGFKPAGVLCELTNDDGTMARAPECIEFANKHNMALVTIEDLVAYRQAHERKAS</sequence>
<keyword id="KW-0456">Lyase</keyword>
<keyword id="KW-0460">Magnesium</keyword>
<keyword id="KW-0464">Manganese</keyword>
<keyword id="KW-0479">Metal-binding</keyword>
<keyword id="KW-0686">Riboflavin biosynthesis</keyword>
<comment type="function">
    <text evidence="1">Catalyzes the conversion of D-ribulose 5-phosphate to formate and 3,4-dihydroxy-2-butanone 4-phosphate.</text>
</comment>
<comment type="catalytic activity">
    <reaction evidence="1">
        <text>D-ribulose 5-phosphate = (2S)-2-hydroxy-3-oxobutyl phosphate + formate + H(+)</text>
        <dbReference type="Rhea" id="RHEA:18457"/>
        <dbReference type="ChEBI" id="CHEBI:15378"/>
        <dbReference type="ChEBI" id="CHEBI:15740"/>
        <dbReference type="ChEBI" id="CHEBI:58121"/>
        <dbReference type="ChEBI" id="CHEBI:58830"/>
        <dbReference type="EC" id="4.1.99.12"/>
    </reaction>
</comment>
<comment type="cofactor">
    <cofactor evidence="1">
        <name>Mg(2+)</name>
        <dbReference type="ChEBI" id="CHEBI:18420"/>
    </cofactor>
    <cofactor evidence="1">
        <name>Mn(2+)</name>
        <dbReference type="ChEBI" id="CHEBI:29035"/>
    </cofactor>
    <text evidence="1">Binds 2 divalent metal cations per subunit. Magnesium or manganese.</text>
</comment>
<comment type="pathway">
    <text evidence="1">Cofactor biosynthesis; riboflavin biosynthesis; 2-hydroxy-3-oxobutyl phosphate from D-ribulose 5-phosphate: step 1/1.</text>
</comment>
<comment type="subunit">
    <text evidence="1">Homodimer.</text>
</comment>
<comment type="similarity">
    <text evidence="1">Belongs to the DHBP synthase family.</text>
</comment>
<evidence type="ECO:0000255" key="1">
    <source>
        <dbReference type="HAMAP-Rule" id="MF_00180"/>
    </source>
</evidence>
<reference key="1">
    <citation type="journal article" date="2009" name="PLoS Genet.">
        <title>Organised genome dynamics in the Escherichia coli species results in highly diverse adaptive paths.</title>
        <authorList>
            <person name="Touchon M."/>
            <person name="Hoede C."/>
            <person name="Tenaillon O."/>
            <person name="Barbe V."/>
            <person name="Baeriswyl S."/>
            <person name="Bidet P."/>
            <person name="Bingen E."/>
            <person name="Bonacorsi S."/>
            <person name="Bouchier C."/>
            <person name="Bouvet O."/>
            <person name="Calteau A."/>
            <person name="Chiapello H."/>
            <person name="Clermont O."/>
            <person name="Cruveiller S."/>
            <person name="Danchin A."/>
            <person name="Diard M."/>
            <person name="Dossat C."/>
            <person name="Karoui M.E."/>
            <person name="Frapy E."/>
            <person name="Garry L."/>
            <person name="Ghigo J.M."/>
            <person name="Gilles A.M."/>
            <person name="Johnson J."/>
            <person name="Le Bouguenec C."/>
            <person name="Lescat M."/>
            <person name="Mangenot S."/>
            <person name="Martinez-Jehanne V."/>
            <person name="Matic I."/>
            <person name="Nassif X."/>
            <person name="Oztas S."/>
            <person name="Petit M.A."/>
            <person name="Pichon C."/>
            <person name="Rouy Z."/>
            <person name="Ruf C.S."/>
            <person name="Schneider D."/>
            <person name="Tourret J."/>
            <person name="Vacherie B."/>
            <person name="Vallenet D."/>
            <person name="Medigue C."/>
            <person name="Rocha E.P.C."/>
            <person name="Denamur E."/>
        </authorList>
    </citation>
    <scope>NUCLEOTIDE SEQUENCE [LARGE SCALE GENOMIC DNA]</scope>
    <source>
        <strain>IAI39 / ExPEC</strain>
    </source>
</reference>
<proteinExistence type="inferred from homology"/>
<organism>
    <name type="scientific">Escherichia coli O7:K1 (strain IAI39 / ExPEC)</name>
    <dbReference type="NCBI Taxonomy" id="585057"/>
    <lineage>
        <taxon>Bacteria</taxon>
        <taxon>Pseudomonadati</taxon>
        <taxon>Pseudomonadota</taxon>
        <taxon>Gammaproteobacteria</taxon>
        <taxon>Enterobacterales</taxon>
        <taxon>Enterobacteriaceae</taxon>
        <taxon>Escherichia</taxon>
    </lineage>
</organism>
<protein>
    <recommendedName>
        <fullName evidence="1">3,4-dihydroxy-2-butanone 4-phosphate synthase</fullName>
        <shortName evidence="1">DHBP synthase</shortName>
        <ecNumber evidence="1">4.1.99.12</ecNumber>
    </recommendedName>
</protein>
<gene>
    <name evidence="1" type="primary">ribB</name>
    <name type="ordered locus">ECIAI39_3538</name>
</gene>
<accession>B7NJQ5</accession>
<feature type="chain" id="PRO_1000118436" description="3,4-dihydroxy-2-butanone 4-phosphate synthase">
    <location>
        <begin position="1"/>
        <end position="217"/>
    </location>
</feature>
<feature type="binding site" evidence="1">
    <location>
        <begin position="37"/>
        <end position="38"/>
    </location>
    <ligand>
        <name>D-ribulose 5-phosphate</name>
        <dbReference type="ChEBI" id="CHEBI:58121"/>
    </ligand>
</feature>
<feature type="binding site" evidence="1">
    <location>
        <position position="38"/>
    </location>
    <ligand>
        <name>Mg(2+)</name>
        <dbReference type="ChEBI" id="CHEBI:18420"/>
        <label>1</label>
    </ligand>
</feature>
<feature type="binding site" evidence="1">
    <location>
        <position position="38"/>
    </location>
    <ligand>
        <name>Mg(2+)</name>
        <dbReference type="ChEBI" id="CHEBI:18420"/>
        <label>2</label>
    </ligand>
</feature>
<feature type="binding site" evidence="1">
    <location>
        <position position="42"/>
    </location>
    <ligand>
        <name>D-ribulose 5-phosphate</name>
        <dbReference type="ChEBI" id="CHEBI:58121"/>
    </ligand>
</feature>
<feature type="binding site" evidence="1">
    <location>
        <begin position="150"/>
        <end position="154"/>
    </location>
    <ligand>
        <name>D-ribulose 5-phosphate</name>
        <dbReference type="ChEBI" id="CHEBI:58121"/>
    </ligand>
</feature>
<feature type="binding site" evidence="1">
    <location>
        <position position="153"/>
    </location>
    <ligand>
        <name>Mg(2+)</name>
        <dbReference type="ChEBI" id="CHEBI:18420"/>
        <label>2</label>
    </ligand>
</feature>
<feature type="binding site" evidence="1">
    <location>
        <position position="174"/>
    </location>
    <ligand>
        <name>D-ribulose 5-phosphate</name>
        <dbReference type="ChEBI" id="CHEBI:58121"/>
    </ligand>
</feature>
<feature type="site" description="Essential for catalytic activity" evidence="1">
    <location>
        <position position="136"/>
    </location>
</feature>
<feature type="site" description="Essential for catalytic activity" evidence="1">
    <location>
        <position position="174"/>
    </location>
</feature>